<keyword id="KW-0044">Antibiotic</keyword>
<keyword id="KW-0929">Antimicrobial</keyword>
<keyword id="KW-0204">Cytolysis</keyword>
<keyword id="KW-0903">Direct protein sequencing</keyword>
<keyword id="KW-0295">Fungicide</keyword>
<keyword id="KW-0354">Hemolysis</keyword>
<keyword id="KW-0964">Secreted</keyword>
<reference key="1">
    <citation type="journal article" date="2010" name="Toxicon">
        <title>Two novel antimicrobial peptides from centipede venoms.</title>
        <authorList>
            <person name="Peng K."/>
            <person name="Kong Y."/>
            <person name="Zhai L."/>
            <person name="Wu X."/>
            <person name="Jia P."/>
            <person name="Liu J."/>
            <person name="Yu H."/>
        </authorList>
    </citation>
    <scope>PROTEIN SEQUENCE</scope>
    <scope>FUNCTION</scope>
    <scope>SYNTHESIS</scope>
    <scope>MASS SPECTROMETRY</scope>
    <scope>SUBCELLULAR LOCATION</scope>
    <source>
        <tissue>Venom</tissue>
    </source>
</reference>
<accession>P0CH48</accession>
<evidence type="ECO:0000269" key="1">
    <source>
    </source>
</evidence>
<evidence type="ECO:0000303" key="2">
    <source>
    </source>
</evidence>
<evidence type="ECO:0000305" key="3">
    <source>
    </source>
</evidence>
<protein>
    <recommendedName>
        <fullName evidence="2">Antimicrobial peptide scolopin-1</fullName>
    </recommendedName>
</protein>
<feature type="peptide" id="PRO_0000398338" description="Antimicrobial peptide scolopin-1" evidence="1">
    <location>
        <begin position="1"/>
        <end position="21"/>
    </location>
</feature>
<comment type="function">
    <text evidence="1">Antimicrobial peptide against both Gram-positive, -negative and yeast. Also induces histamine release by mast cells and shows moderate hemolytic activities against both human and rabbit red cells.</text>
</comment>
<comment type="subcellular location">
    <subcellularLocation>
        <location evidence="1">Secreted</location>
    </subcellularLocation>
</comment>
<comment type="tissue specificity">
    <text evidence="3">Expressed by the venom gland.</text>
</comment>
<comment type="mass spectrometry" mass="2594.94" method="MALDI" evidence="1"/>
<comment type="miscellaneous">
    <text>Minimum inhibitory concentrations (MIC) are the following: E.coli standard strain (MIC=12.5 ug/ml), E.coli drug-resistant strain (MIC=15 ug/ml), S.aureus standard strain (MIC=1.2 ug/ml), S.aureus drug-resistant strain (MIC=5.0 ug/ml), B.dysenteriae standard and drug-resistant strains (MIC=7.5 ug/ml) and C.albicans (MIC=15 ug/ml).</text>
</comment>
<dbReference type="GO" id="GO:0005576">
    <property type="term" value="C:extracellular region"/>
    <property type="evidence" value="ECO:0007669"/>
    <property type="project" value="UniProtKB-SubCell"/>
</dbReference>
<dbReference type="GO" id="GO:0042742">
    <property type="term" value="P:defense response to bacterium"/>
    <property type="evidence" value="ECO:0007669"/>
    <property type="project" value="UniProtKB-KW"/>
</dbReference>
<dbReference type="GO" id="GO:0050832">
    <property type="term" value="P:defense response to fungus"/>
    <property type="evidence" value="ECO:0007669"/>
    <property type="project" value="UniProtKB-KW"/>
</dbReference>
<dbReference type="GO" id="GO:0031640">
    <property type="term" value="P:killing of cells of another organism"/>
    <property type="evidence" value="ECO:0007669"/>
    <property type="project" value="UniProtKB-KW"/>
</dbReference>
<proteinExistence type="evidence at protein level"/>
<organism>
    <name type="scientific">Scolopendra mutilans</name>
    <name type="common">Chinese red-headed centipede</name>
    <name type="synonym">Scolopendra subspinipes mutilans</name>
    <dbReference type="NCBI Taxonomy" id="2836329"/>
    <lineage>
        <taxon>Eukaryota</taxon>
        <taxon>Metazoa</taxon>
        <taxon>Ecdysozoa</taxon>
        <taxon>Arthropoda</taxon>
        <taxon>Myriapoda</taxon>
        <taxon>Chilopoda</taxon>
        <taxon>Pleurostigmophora</taxon>
        <taxon>Scolopendromorpha</taxon>
        <taxon>Scolopendridae</taxon>
        <taxon>Scolopendra</taxon>
    </lineage>
</organism>
<sequence length="21" mass="2594">FLPKMSTKLRVPYRRGTKDYH</sequence>
<name>AMP1_SCOMU</name>